<feature type="chain" id="PRO_0000085328" description="Virion infectivity factor">
    <location>
        <begin position="1"/>
        <end position="219"/>
    </location>
</feature>
<feature type="region of interest" description="Multimerization" evidence="1">
    <location>
        <begin position="153"/>
        <end position="165"/>
    </location>
</feature>
<feature type="short sequence motif" description="HCCH motif" evidence="1">
    <location>
        <begin position="110"/>
        <end position="140"/>
    </location>
</feature>
<feature type="short sequence motif" description="BC-box-like motif" evidence="1">
    <location>
        <begin position="146"/>
        <end position="155"/>
    </location>
</feature>
<feature type="modified residue" description="Phosphothreonine; by host" evidence="1">
    <location>
        <position position="98"/>
    </location>
</feature>
<feature type="modified residue" description="Phosphoserine; by host" evidence="1">
    <location>
        <position position="146"/>
    </location>
</feature>
<organism>
    <name type="scientific">Simian immunodeficiency virus agm.grivet (isolate AGM gr-1)</name>
    <name type="common">SIV-agm.gri</name>
    <name type="synonym">Simian immunodeficiency virus African green monkey grivet</name>
    <dbReference type="NCBI Taxonomy" id="31684"/>
    <lineage>
        <taxon>Viruses</taxon>
        <taxon>Riboviria</taxon>
        <taxon>Pararnavirae</taxon>
        <taxon>Artverviricota</taxon>
        <taxon>Revtraviricetes</taxon>
        <taxon>Ortervirales</taxon>
        <taxon>Retroviridae</taxon>
        <taxon>Orthoretrovirinae</taxon>
        <taxon>Lentivirus</taxon>
        <taxon>Simian immunodeficiency virus</taxon>
    </lineage>
</organism>
<comment type="function">
    <text evidence="1">Counteracts the innate antiviral activity of APOBEC3G. Forms a complex with host APOBEC3G thus preventing the entry of this lethally hypermutating enzyme into progeny virions. Functions as an adapter molecule, recruiting APOBEC3G to the ubiquitin-proteasome machinery. Targets APOBEC3G for degradation through the assembly with elongin BC complex, CUL5 and RBX1. Binds viral RNA and affects the stability of viral nucleoprotein core. May play a role in viral morphology (By similarity).</text>
</comment>
<comment type="subunit">
    <text evidence="1">Homomultimer; in vitro and presumably in vivo. Interacts with viral Pr55Gag precursor and host APOBEC3G. The interaction between Vif and APOBEC3G is species-specific, which may play a role in restricting the replication of SIV to their host. Forms an E3 ligase complex by interacting with host CUL5 and elongin BC complex (ELOB and ELOC) (By similarity).</text>
</comment>
<comment type="subcellular location">
    <subcellularLocation>
        <location evidence="1">Host cytoplasm</location>
    </subcellularLocation>
    <subcellularLocation>
        <location evidence="1">Host cell membrane</location>
        <topology evidence="1">Peripheral membrane protein</topology>
        <orientation evidence="1">Cytoplasmic side</orientation>
    </subcellularLocation>
    <subcellularLocation>
        <location evidence="1">Virion</location>
    </subcellularLocation>
    <text evidence="1">Seems to colocalize with intermediate filament vimentin. A fraction is associated with the cytoplasmic side of cellular membranes, presumably via the interaction with Pr55Gag precursor (By similarity).</text>
</comment>
<comment type="induction">
    <text>Expressed late during infection in a Rev-dependent manner.</text>
</comment>
<comment type="domain">
    <text evidence="1">The BC-like-box motif mediates the interaction with elongin BC complex.</text>
</comment>
<comment type="domain">
    <text evidence="1">The HCCH motif (H-x(5)-C-x(18)-C-x(5)-H) mediates the interaction with CUL5.</text>
</comment>
<comment type="PTM">
    <text evidence="1">Processed in virion by the viral protease.</text>
</comment>
<comment type="PTM">
    <text evidence="1">Highly phosphorylated on serine and threonine residues.</text>
</comment>
<comment type="PTM">
    <text evidence="1">Polyubiquitinated and degraded by the proteasome in the presence of APOBEC3G.</text>
</comment>
<comment type="miscellaneous">
    <text>Vif-defective viruses show catastrophic failure in reverse transcription due to APOBEC-induced mutations that initiate a DNA base repair pathway and compromise the structural integrity of the ssDNA. In the absence of Vif, the virion is morphologically abnormal.</text>
</comment>
<comment type="miscellaneous">
    <text>This is an African green monkey isolate.</text>
</comment>
<comment type="similarity">
    <text evidence="2">Belongs to the primate lentivirus group Vif protein family.</text>
</comment>
<evidence type="ECO:0000250" key="1"/>
<evidence type="ECO:0000305" key="2"/>
<protein>
    <recommendedName>
        <fullName>Virion infectivity factor</fullName>
        <shortName>Vif</shortName>
    </recommendedName>
    <alternativeName>
        <fullName>Q protein</fullName>
    </alternativeName>
    <alternativeName>
        <fullName>SOR protein</fullName>
    </alternativeName>
</protein>
<proteinExistence type="evidence at transcript level"/>
<name>VIF_SIVG1</name>
<accession>Q02841</accession>
<gene>
    <name type="primary">vif</name>
</gene>
<organismHost>
    <name type="scientific">Cercopithecidae</name>
    <name type="common">Old World monkeys</name>
    <dbReference type="NCBI Taxonomy" id="9527"/>
</organismHost>
<dbReference type="EMBL" id="M66437">
    <property type="protein sequence ID" value="AAA91924.1"/>
    <property type="molecule type" value="Genomic_DNA"/>
</dbReference>
<dbReference type="EMBL" id="M58410">
    <property type="protein sequence ID" value="AAA47589.1"/>
    <property type="molecule type" value="Genomic_RNA"/>
</dbReference>
<dbReference type="RefSeq" id="NP_054370.1">
    <property type="nucleotide sequence ID" value="NC_001549.1"/>
</dbReference>
<dbReference type="SMR" id="Q02841"/>
<dbReference type="BioGRID" id="3509202">
    <property type="interactions" value="1"/>
</dbReference>
<dbReference type="GeneID" id="1490005"/>
<dbReference type="KEGG" id="vg:1490005"/>
<dbReference type="Proteomes" id="UP000201112">
    <property type="component" value="Segment"/>
</dbReference>
<dbReference type="Proteomes" id="UP000257419">
    <property type="component" value="Segment"/>
</dbReference>
<dbReference type="GO" id="GO:0030430">
    <property type="term" value="C:host cell cytoplasm"/>
    <property type="evidence" value="ECO:0007669"/>
    <property type="project" value="UniProtKB-SubCell"/>
</dbReference>
<dbReference type="GO" id="GO:0020002">
    <property type="term" value="C:host cell plasma membrane"/>
    <property type="evidence" value="ECO:0007669"/>
    <property type="project" value="UniProtKB-SubCell"/>
</dbReference>
<dbReference type="GO" id="GO:0016020">
    <property type="term" value="C:membrane"/>
    <property type="evidence" value="ECO:0007669"/>
    <property type="project" value="UniProtKB-KW"/>
</dbReference>
<dbReference type="GO" id="GO:0044423">
    <property type="term" value="C:virion component"/>
    <property type="evidence" value="ECO:0007669"/>
    <property type="project" value="UniProtKB-KW"/>
</dbReference>
<dbReference type="GO" id="GO:0019058">
    <property type="term" value="P:viral life cycle"/>
    <property type="evidence" value="ECO:0007669"/>
    <property type="project" value="InterPro"/>
</dbReference>
<dbReference type="InterPro" id="IPR000475">
    <property type="entry name" value="Vif"/>
</dbReference>
<dbReference type="Pfam" id="PF00559">
    <property type="entry name" value="Vif"/>
    <property type="match status" value="1"/>
</dbReference>
<dbReference type="PRINTS" id="PR00349">
    <property type="entry name" value="VIRIONINFFCT"/>
</dbReference>
<keyword id="KW-1032">Host cell membrane</keyword>
<keyword id="KW-1035">Host cytoplasm</keyword>
<keyword id="KW-1043">Host membrane</keyword>
<keyword id="KW-0945">Host-virus interaction</keyword>
<keyword id="KW-0472">Membrane</keyword>
<keyword id="KW-0597">Phosphoprotein</keyword>
<keyword id="KW-0832">Ubl conjugation</keyword>
<keyword id="KW-0833">Ubl conjugation pathway</keyword>
<keyword id="KW-0946">Virion</keyword>
<reference key="1">
    <citation type="journal article" date="1991" name="Virology">
        <title>A highly divergent proviral DNA clone of SIV from a distinct species of African green monkey.</title>
        <authorList>
            <person name="Fomsgaard A."/>
            <person name="Hirsch V.M."/>
            <person name="Allan J.S."/>
            <person name="Johnson P.R."/>
        </authorList>
    </citation>
    <scope>NUCLEOTIDE SEQUENCE [GENOMIC DNA]</scope>
</reference>
<sequence>MEREKQWIVRVVWRVSERQISRWRGIVTYKIRNKQLPWEYRHHWQVQWQFWTYSQFIIPLSKDDYIEVNIYHNLTPERGWLSSHGVGLSYYHQKGYKTEVDPGTADRMIHLYYFNCFTDRAIQQAIRGEKYTWCTFKEGHKGQVQSLQLLALVAYTNGIRKRSKRTFTRMAGNLGSRQGAMGRMATRHAQGSKRRSQKALWNEHANPSMELLCRGGKET</sequence>